<comment type="function">
    <text evidence="1">Catalyzes the pyruvoyl-dependent decarboxylation of aspartate to produce beta-alanine.</text>
</comment>
<comment type="catalytic activity">
    <reaction evidence="1">
        <text>L-aspartate + H(+) = beta-alanine + CO2</text>
        <dbReference type="Rhea" id="RHEA:19497"/>
        <dbReference type="ChEBI" id="CHEBI:15378"/>
        <dbReference type="ChEBI" id="CHEBI:16526"/>
        <dbReference type="ChEBI" id="CHEBI:29991"/>
        <dbReference type="ChEBI" id="CHEBI:57966"/>
        <dbReference type="EC" id="4.1.1.11"/>
    </reaction>
</comment>
<comment type="cofactor">
    <cofactor evidence="1">
        <name>pyruvate</name>
        <dbReference type="ChEBI" id="CHEBI:15361"/>
    </cofactor>
    <text evidence="1">Binds 1 pyruvoyl group covalently per subunit.</text>
</comment>
<comment type="pathway">
    <text evidence="1">Cofactor biosynthesis; (R)-pantothenate biosynthesis; beta-alanine from L-aspartate: step 1/1.</text>
</comment>
<comment type="subunit">
    <text evidence="1">Heterooctamer of four alpha and four beta subunits.</text>
</comment>
<comment type="subcellular location">
    <subcellularLocation>
        <location evidence="1">Cytoplasm</location>
    </subcellularLocation>
</comment>
<comment type="PTM">
    <text evidence="1">Is synthesized initially as an inactive proenzyme, which is activated by self-cleavage at a specific serine bond to produce a beta-subunit with a hydroxyl group at its C-terminus and an alpha-subunit with a pyruvoyl group at its N-terminus.</text>
</comment>
<comment type="similarity">
    <text evidence="1">Belongs to the PanD family.</text>
</comment>
<reference key="1">
    <citation type="journal article" date="2003" name="J. Bacteriol.">
        <title>Comparative analyses of the complete genome sequences of Pierce's disease and citrus variegated chlorosis strains of Xylella fastidiosa.</title>
        <authorList>
            <person name="Van Sluys M.A."/>
            <person name="de Oliveira M.C."/>
            <person name="Monteiro-Vitorello C.B."/>
            <person name="Miyaki C.Y."/>
            <person name="Furlan L.R."/>
            <person name="Camargo L.E.A."/>
            <person name="da Silva A.C.R."/>
            <person name="Moon D.H."/>
            <person name="Takita M.A."/>
            <person name="Lemos E.G.M."/>
            <person name="Machado M.A."/>
            <person name="Ferro M.I.T."/>
            <person name="da Silva F.R."/>
            <person name="Goldman M.H.S."/>
            <person name="Goldman G.H."/>
            <person name="Lemos M.V.F."/>
            <person name="El-Dorry H."/>
            <person name="Tsai S.M."/>
            <person name="Carrer H."/>
            <person name="Carraro D.M."/>
            <person name="de Oliveira R.C."/>
            <person name="Nunes L.R."/>
            <person name="Siqueira W.J."/>
            <person name="Coutinho L.L."/>
            <person name="Kimura E.T."/>
            <person name="Ferro E.S."/>
            <person name="Harakava R."/>
            <person name="Kuramae E.E."/>
            <person name="Marino C.L."/>
            <person name="Giglioti E."/>
            <person name="Abreu I.L."/>
            <person name="Alves L.M.C."/>
            <person name="do Amaral A.M."/>
            <person name="Baia G.S."/>
            <person name="Blanco S.R."/>
            <person name="Brito M.S."/>
            <person name="Cannavan F.S."/>
            <person name="Celestino A.V."/>
            <person name="da Cunha A.F."/>
            <person name="Fenille R.C."/>
            <person name="Ferro J.A."/>
            <person name="Formighieri E.F."/>
            <person name="Kishi L.T."/>
            <person name="Leoni S.G."/>
            <person name="Oliveira A.R."/>
            <person name="Rosa V.E. Jr."/>
            <person name="Sassaki F.T."/>
            <person name="Sena J.A.D."/>
            <person name="de Souza A.A."/>
            <person name="Truffi D."/>
            <person name="Tsukumo F."/>
            <person name="Yanai G.M."/>
            <person name="Zaros L.G."/>
            <person name="Civerolo E.L."/>
            <person name="Simpson A.J.G."/>
            <person name="Almeida N.F. Jr."/>
            <person name="Setubal J.C."/>
            <person name="Kitajima J.P."/>
        </authorList>
    </citation>
    <scope>NUCLEOTIDE SEQUENCE [LARGE SCALE GENOMIC DNA]</scope>
    <source>
        <strain>Temecula1 / ATCC 700964</strain>
    </source>
</reference>
<keyword id="KW-0068">Autocatalytic cleavage</keyword>
<keyword id="KW-0963">Cytoplasm</keyword>
<keyword id="KW-0210">Decarboxylase</keyword>
<keyword id="KW-0456">Lyase</keyword>
<keyword id="KW-0566">Pantothenate biosynthesis</keyword>
<keyword id="KW-0670">Pyruvate</keyword>
<keyword id="KW-1185">Reference proteome</keyword>
<keyword id="KW-0704">Schiff base</keyword>
<keyword id="KW-0865">Zymogen</keyword>
<dbReference type="EC" id="4.1.1.11" evidence="1"/>
<dbReference type="EMBL" id="AE009442">
    <property type="protein sequence ID" value="AAO28081.1"/>
    <property type="molecule type" value="Genomic_DNA"/>
</dbReference>
<dbReference type="RefSeq" id="WP_011097535.1">
    <property type="nucleotide sequence ID" value="NC_004556.1"/>
</dbReference>
<dbReference type="SMR" id="Q87EV8"/>
<dbReference type="GeneID" id="93903880"/>
<dbReference type="KEGG" id="xft:PD_0189"/>
<dbReference type="HOGENOM" id="CLU_115305_2_1_6"/>
<dbReference type="UniPathway" id="UPA00028">
    <property type="reaction ID" value="UER00002"/>
</dbReference>
<dbReference type="Proteomes" id="UP000002516">
    <property type="component" value="Chromosome"/>
</dbReference>
<dbReference type="GO" id="GO:0005829">
    <property type="term" value="C:cytosol"/>
    <property type="evidence" value="ECO:0007669"/>
    <property type="project" value="TreeGrafter"/>
</dbReference>
<dbReference type="GO" id="GO:0004068">
    <property type="term" value="F:aspartate 1-decarboxylase activity"/>
    <property type="evidence" value="ECO:0007669"/>
    <property type="project" value="UniProtKB-UniRule"/>
</dbReference>
<dbReference type="GO" id="GO:0006523">
    <property type="term" value="P:alanine biosynthetic process"/>
    <property type="evidence" value="ECO:0007669"/>
    <property type="project" value="InterPro"/>
</dbReference>
<dbReference type="GO" id="GO:0015940">
    <property type="term" value="P:pantothenate biosynthetic process"/>
    <property type="evidence" value="ECO:0007669"/>
    <property type="project" value="UniProtKB-UniRule"/>
</dbReference>
<dbReference type="CDD" id="cd06919">
    <property type="entry name" value="Asp_decarbox"/>
    <property type="match status" value="1"/>
</dbReference>
<dbReference type="Gene3D" id="2.40.40.20">
    <property type="match status" value="1"/>
</dbReference>
<dbReference type="HAMAP" id="MF_00446">
    <property type="entry name" value="PanD"/>
    <property type="match status" value="1"/>
</dbReference>
<dbReference type="InterPro" id="IPR009010">
    <property type="entry name" value="Asp_de-COase-like_dom_sf"/>
</dbReference>
<dbReference type="InterPro" id="IPR003190">
    <property type="entry name" value="Asp_decarbox"/>
</dbReference>
<dbReference type="NCBIfam" id="TIGR00223">
    <property type="entry name" value="panD"/>
    <property type="match status" value="1"/>
</dbReference>
<dbReference type="PANTHER" id="PTHR21012">
    <property type="entry name" value="ASPARTATE 1-DECARBOXYLASE"/>
    <property type="match status" value="1"/>
</dbReference>
<dbReference type="PANTHER" id="PTHR21012:SF0">
    <property type="entry name" value="ASPARTATE 1-DECARBOXYLASE"/>
    <property type="match status" value="1"/>
</dbReference>
<dbReference type="Pfam" id="PF02261">
    <property type="entry name" value="Asp_decarbox"/>
    <property type="match status" value="1"/>
</dbReference>
<dbReference type="PIRSF" id="PIRSF006246">
    <property type="entry name" value="Asp_decarbox"/>
    <property type="match status" value="1"/>
</dbReference>
<dbReference type="SUPFAM" id="SSF50692">
    <property type="entry name" value="ADC-like"/>
    <property type="match status" value="1"/>
</dbReference>
<sequence length="126" mass="13596">MQLSLLKAKIHRATVSHSELNYEGSIAIDGLLLEAAGLYEFEKVHIWNVTNGARFTTYAIRAEHGSGIISVNGGAARYVQVGDLVIVAAFAQMSEDEAAVFRPNLVYVNAANAMTHTNHSIPTQVA</sequence>
<accession>Q87EV8</accession>
<organism>
    <name type="scientific">Xylella fastidiosa (strain Temecula1 / ATCC 700964)</name>
    <dbReference type="NCBI Taxonomy" id="183190"/>
    <lineage>
        <taxon>Bacteria</taxon>
        <taxon>Pseudomonadati</taxon>
        <taxon>Pseudomonadota</taxon>
        <taxon>Gammaproteobacteria</taxon>
        <taxon>Lysobacterales</taxon>
        <taxon>Lysobacteraceae</taxon>
        <taxon>Xylella</taxon>
    </lineage>
</organism>
<evidence type="ECO:0000255" key="1">
    <source>
        <dbReference type="HAMAP-Rule" id="MF_00446"/>
    </source>
</evidence>
<protein>
    <recommendedName>
        <fullName evidence="1">Aspartate 1-decarboxylase</fullName>
        <ecNumber evidence="1">4.1.1.11</ecNumber>
    </recommendedName>
    <alternativeName>
        <fullName evidence="1">Aspartate alpha-decarboxylase</fullName>
    </alternativeName>
    <component>
        <recommendedName>
            <fullName evidence="1">Aspartate 1-decarboxylase beta chain</fullName>
        </recommendedName>
    </component>
    <component>
        <recommendedName>
            <fullName evidence="1">Aspartate 1-decarboxylase alpha chain</fullName>
        </recommendedName>
    </component>
</protein>
<name>PAND_XYLFT</name>
<gene>
    <name evidence="1" type="primary">panD</name>
    <name type="ordered locus">PD_0189</name>
</gene>
<proteinExistence type="inferred from homology"/>
<feature type="chain" id="PRO_0000023195" description="Aspartate 1-decarboxylase beta chain" evidence="1">
    <location>
        <begin position="1"/>
        <end position="24"/>
    </location>
</feature>
<feature type="chain" id="PRO_0000023196" description="Aspartate 1-decarboxylase alpha chain" evidence="1">
    <location>
        <begin position="25"/>
        <end position="126"/>
    </location>
</feature>
<feature type="active site" description="Schiff-base intermediate with substrate; via pyruvic acid" evidence="1">
    <location>
        <position position="25"/>
    </location>
</feature>
<feature type="active site" description="Proton donor" evidence="1">
    <location>
        <position position="58"/>
    </location>
</feature>
<feature type="binding site" evidence="1">
    <location>
        <position position="57"/>
    </location>
    <ligand>
        <name>substrate</name>
    </ligand>
</feature>
<feature type="binding site" evidence="1">
    <location>
        <begin position="73"/>
        <end position="75"/>
    </location>
    <ligand>
        <name>substrate</name>
    </ligand>
</feature>
<feature type="modified residue" description="Pyruvic acid (Ser)" evidence="1">
    <location>
        <position position="25"/>
    </location>
</feature>